<feature type="initiator methionine" description="Removed" evidence="1">
    <location>
        <position position="1"/>
    </location>
</feature>
<feature type="chain" id="PRO_0000161129" description="Elongation factor Ts">
    <location>
        <begin position="2"/>
        <end position="283"/>
    </location>
</feature>
<feature type="region of interest" description="Involved in Mg(2+) ion dislocation from EF-Tu" evidence="2">
    <location>
        <begin position="80"/>
        <end position="83"/>
    </location>
</feature>
<evidence type="ECO:0000250" key="1"/>
<evidence type="ECO:0000255" key="2">
    <source>
        <dbReference type="HAMAP-Rule" id="MF_00050"/>
    </source>
</evidence>
<name>EFTS_HAEI8</name>
<keyword id="KW-0963">Cytoplasm</keyword>
<keyword id="KW-0251">Elongation factor</keyword>
<keyword id="KW-0648">Protein biosynthesis</keyword>
<accession>Q4QLZ5</accession>
<proteinExistence type="inferred from homology"/>
<comment type="function">
    <text evidence="2">Associates with the EF-Tu.GDP complex and induces the exchange of GDP to GTP. It remains bound to the aminoacyl-tRNA.EF-Tu.GTP complex up to the GTP hydrolysis stage on the ribosome.</text>
</comment>
<comment type="subcellular location">
    <subcellularLocation>
        <location evidence="2">Cytoplasm</location>
    </subcellularLocation>
</comment>
<comment type="similarity">
    <text evidence="2">Belongs to the EF-Ts family.</text>
</comment>
<sequence length="283" mass="30158">MAEITASLVKELRDRTGAGMMECKKALVEANGDIELAIDNMRKSGQAKAAKKAGRVAAEGVILARVENGFGVLVEMNCETDFVAKDAGFLGLANEVADFAAANKGTTIEALQAQFEEKRAALVAKIGENMNIRRVAYLDGQVIAQYLHGAKIGVLVAGEGSADELKKVAMHVAASKPEFVNPEDVSAEVVEHERQIQIDIAINSGKPKEIAEKMVEGRMKKFTGEVSLTGQAFVMDPSVSVGDFLKSVNTSVSNFIRLEVGEGIEKKEEDFAAEVAKITGGNA</sequence>
<reference key="1">
    <citation type="journal article" date="2005" name="J. Bacteriol.">
        <title>Genomic sequence of an otitis media isolate of nontypeable Haemophilus influenzae: comparative study with H. influenzae serotype d, strain KW20.</title>
        <authorList>
            <person name="Harrison A."/>
            <person name="Dyer D.W."/>
            <person name="Gillaspy A."/>
            <person name="Ray W.C."/>
            <person name="Mungur R."/>
            <person name="Carson M.B."/>
            <person name="Zhong H."/>
            <person name="Gipson J."/>
            <person name="Gipson M."/>
            <person name="Johnson L.S."/>
            <person name="Lewis L."/>
            <person name="Bakaletz L.O."/>
            <person name="Munson R.S. Jr."/>
        </authorList>
    </citation>
    <scope>NUCLEOTIDE SEQUENCE [LARGE SCALE GENOMIC DNA]</scope>
    <source>
        <strain>86-028NP</strain>
    </source>
</reference>
<dbReference type="EMBL" id="CP000057">
    <property type="protein sequence ID" value="AAX87952.1"/>
    <property type="molecule type" value="Genomic_DNA"/>
</dbReference>
<dbReference type="RefSeq" id="WP_005648092.1">
    <property type="nucleotide sequence ID" value="NC_007146.2"/>
</dbReference>
<dbReference type="SMR" id="Q4QLZ5"/>
<dbReference type="GeneID" id="93219950"/>
<dbReference type="KEGG" id="hit:NTHI1081"/>
<dbReference type="HOGENOM" id="CLU_047155_0_2_6"/>
<dbReference type="Proteomes" id="UP000002525">
    <property type="component" value="Chromosome"/>
</dbReference>
<dbReference type="GO" id="GO:0005737">
    <property type="term" value="C:cytoplasm"/>
    <property type="evidence" value="ECO:0007669"/>
    <property type="project" value="UniProtKB-SubCell"/>
</dbReference>
<dbReference type="GO" id="GO:0003746">
    <property type="term" value="F:translation elongation factor activity"/>
    <property type="evidence" value="ECO:0007669"/>
    <property type="project" value="UniProtKB-UniRule"/>
</dbReference>
<dbReference type="CDD" id="cd14275">
    <property type="entry name" value="UBA_EF-Ts"/>
    <property type="match status" value="1"/>
</dbReference>
<dbReference type="FunFam" id="1.10.286.20:FF:000001">
    <property type="entry name" value="Elongation factor Ts"/>
    <property type="match status" value="1"/>
</dbReference>
<dbReference type="FunFam" id="1.10.8.10:FF:000001">
    <property type="entry name" value="Elongation factor Ts"/>
    <property type="match status" value="1"/>
</dbReference>
<dbReference type="FunFam" id="3.30.479.20:FF:000001">
    <property type="entry name" value="Elongation factor Ts"/>
    <property type="match status" value="1"/>
</dbReference>
<dbReference type="Gene3D" id="1.10.286.20">
    <property type="match status" value="1"/>
</dbReference>
<dbReference type="Gene3D" id="1.10.8.10">
    <property type="entry name" value="DNA helicase RuvA subunit, C-terminal domain"/>
    <property type="match status" value="1"/>
</dbReference>
<dbReference type="Gene3D" id="3.30.479.20">
    <property type="entry name" value="Elongation factor Ts, dimerisation domain"/>
    <property type="match status" value="2"/>
</dbReference>
<dbReference type="HAMAP" id="MF_00050">
    <property type="entry name" value="EF_Ts"/>
    <property type="match status" value="1"/>
</dbReference>
<dbReference type="InterPro" id="IPR036402">
    <property type="entry name" value="EF-Ts_dimer_sf"/>
</dbReference>
<dbReference type="InterPro" id="IPR001816">
    <property type="entry name" value="Transl_elong_EFTs/EF1B"/>
</dbReference>
<dbReference type="InterPro" id="IPR014039">
    <property type="entry name" value="Transl_elong_EFTs/EF1B_dimer"/>
</dbReference>
<dbReference type="InterPro" id="IPR018101">
    <property type="entry name" value="Transl_elong_Ts_CS"/>
</dbReference>
<dbReference type="InterPro" id="IPR009060">
    <property type="entry name" value="UBA-like_sf"/>
</dbReference>
<dbReference type="NCBIfam" id="TIGR00116">
    <property type="entry name" value="tsf"/>
    <property type="match status" value="1"/>
</dbReference>
<dbReference type="PANTHER" id="PTHR11741">
    <property type="entry name" value="ELONGATION FACTOR TS"/>
    <property type="match status" value="1"/>
</dbReference>
<dbReference type="PANTHER" id="PTHR11741:SF0">
    <property type="entry name" value="ELONGATION FACTOR TS, MITOCHONDRIAL"/>
    <property type="match status" value="1"/>
</dbReference>
<dbReference type="Pfam" id="PF00889">
    <property type="entry name" value="EF_TS"/>
    <property type="match status" value="1"/>
</dbReference>
<dbReference type="SUPFAM" id="SSF54713">
    <property type="entry name" value="Elongation factor Ts (EF-Ts), dimerisation domain"/>
    <property type="match status" value="2"/>
</dbReference>
<dbReference type="SUPFAM" id="SSF46934">
    <property type="entry name" value="UBA-like"/>
    <property type="match status" value="1"/>
</dbReference>
<dbReference type="PROSITE" id="PS01126">
    <property type="entry name" value="EF_TS_1"/>
    <property type="match status" value="1"/>
</dbReference>
<dbReference type="PROSITE" id="PS01127">
    <property type="entry name" value="EF_TS_2"/>
    <property type="match status" value="1"/>
</dbReference>
<organism>
    <name type="scientific">Haemophilus influenzae (strain 86-028NP)</name>
    <dbReference type="NCBI Taxonomy" id="281310"/>
    <lineage>
        <taxon>Bacteria</taxon>
        <taxon>Pseudomonadati</taxon>
        <taxon>Pseudomonadota</taxon>
        <taxon>Gammaproteobacteria</taxon>
        <taxon>Pasteurellales</taxon>
        <taxon>Pasteurellaceae</taxon>
        <taxon>Haemophilus</taxon>
    </lineage>
</organism>
<gene>
    <name evidence="2" type="primary">tsf</name>
    <name type="ordered locus">NTHI1081</name>
</gene>
<protein>
    <recommendedName>
        <fullName evidence="2">Elongation factor Ts</fullName>
        <shortName evidence="2">EF-Ts</shortName>
    </recommendedName>
</protein>